<proteinExistence type="evidence at protein level"/>
<accession>P20458</accession>
<dbReference type="EMBL" id="M26414">
    <property type="protein sequence ID" value="AAA22213.1"/>
    <property type="molecule type" value="Genomic_DNA"/>
</dbReference>
<dbReference type="EMBL" id="L47971">
    <property type="protein sequence ID" value="AAB06822.1"/>
    <property type="molecule type" value="Genomic_DNA"/>
</dbReference>
<dbReference type="EMBL" id="AL009126">
    <property type="protein sequence ID" value="CAB11915.1"/>
    <property type="molecule type" value="Genomic_DNA"/>
</dbReference>
<dbReference type="PIR" id="F69644">
    <property type="entry name" value="F69644"/>
</dbReference>
<dbReference type="RefSeq" id="NP_388020.1">
    <property type="nucleotide sequence ID" value="NC_000964.3"/>
</dbReference>
<dbReference type="RefSeq" id="WP_003156508.1">
    <property type="nucleotide sequence ID" value="NZ_OZ025638.1"/>
</dbReference>
<dbReference type="SMR" id="P20458"/>
<dbReference type="FunCoup" id="P20458">
    <property type="interactions" value="396"/>
</dbReference>
<dbReference type="STRING" id="224308.BSU01390"/>
<dbReference type="iPTMnet" id="P20458"/>
<dbReference type="jPOST" id="P20458"/>
<dbReference type="PaxDb" id="224308-BSU01390"/>
<dbReference type="EnsemblBacteria" id="CAB11915">
    <property type="protein sequence ID" value="CAB11915"/>
    <property type="gene ID" value="BSU_01390"/>
</dbReference>
<dbReference type="GeneID" id="93079303"/>
<dbReference type="GeneID" id="938924"/>
<dbReference type="KEGG" id="bsu:BSU01390"/>
<dbReference type="PATRIC" id="fig|224308.179.peg.143"/>
<dbReference type="eggNOG" id="COG0361">
    <property type="taxonomic scope" value="Bacteria"/>
</dbReference>
<dbReference type="InParanoid" id="P20458"/>
<dbReference type="OrthoDB" id="9803250at2"/>
<dbReference type="PhylomeDB" id="P20458"/>
<dbReference type="BioCyc" id="BSUB:BSU01390-MONOMER"/>
<dbReference type="PRO" id="PR:P20458"/>
<dbReference type="Proteomes" id="UP000001570">
    <property type="component" value="Chromosome"/>
</dbReference>
<dbReference type="GO" id="GO:0005829">
    <property type="term" value="C:cytosol"/>
    <property type="evidence" value="ECO:0000318"/>
    <property type="project" value="GO_Central"/>
</dbReference>
<dbReference type="GO" id="GO:0043022">
    <property type="term" value="F:ribosome binding"/>
    <property type="evidence" value="ECO:0000318"/>
    <property type="project" value="GO_Central"/>
</dbReference>
<dbReference type="GO" id="GO:0019843">
    <property type="term" value="F:rRNA binding"/>
    <property type="evidence" value="ECO:0007669"/>
    <property type="project" value="UniProtKB-UniRule"/>
</dbReference>
<dbReference type="GO" id="GO:0003743">
    <property type="term" value="F:translation initiation factor activity"/>
    <property type="evidence" value="ECO:0007669"/>
    <property type="project" value="UniProtKB-UniRule"/>
</dbReference>
<dbReference type="CDD" id="cd04451">
    <property type="entry name" value="S1_IF1"/>
    <property type="match status" value="1"/>
</dbReference>
<dbReference type="FunFam" id="2.40.50.140:FF:000002">
    <property type="entry name" value="Translation initiation factor IF-1"/>
    <property type="match status" value="1"/>
</dbReference>
<dbReference type="Gene3D" id="2.40.50.140">
    <property type="entry name" value="Nucleic acid-binding proteins"/>
    <property type="match status" value="1"/>
</dbReference>
<dbReference type="HAMAP" id="MF_00075">
    <property type="entry name" value="IF_1"/>
    <property type="match status" value="1"/>
</dbReference>
<dbReference type="InterPro" id="IPR012340">
    <property type="entry name" value="NA-bd_OB-fold"/>
</dbReference>
<dbReference type="InterPro" id="IPR006196">
    <property type="entry name" value="RNA-binding_domain_S1_IF1"/>
</dbReference>
<dbReference type="InterPro" id="IPR003029">
    <property type="entry name" value="S1_domain"/>
</dbReference>
<dbReference type="InterPro" id="IPR004368">
    <property type="entry name" value="TIF_IF1"/>
</dbReference>
<dbReference type="NCBIfam" id="TIGR00008">
    <property type="entry name" value="infA"/>
    <property type="match status" value="1"/>
</dbReference>
<dbReference type="PANTHER" id="PTHR33370">
    <property type="entry name" value="TRANSLATION INITIATION FACTOR IF-1, CHLOROPLASTIC"/>
    <property type="match status" value="1"/>
</dbReference>
<dbReference type="PANTHER" id="PTHR33370:SF1">
    <property type="entry name" value="TRANSLATION INITIATION FACTOR IF-1, CHLOROPLASTIC"/>
    <property type="match status" value="1"/>
</dbReference>
<dbReference type="Pfam" id="PF01176">
    <property type="entry name" value="eIF-1a"/>
    <property type="match status" value="1"/>
</dbReference>
<dbReference type="SMART" id="SM00316">
    <property type="entry name" value="S1"/>
    <property type="match status" value="1"/>
</dbReference>
<dbReference type="SUPFAM" id="SSF50249">
    <property type="entry name" value="Nucleic acid-binding proteins"/>
    <property type="match status" value="1"/>
</dbReference>
<dbReference type="PROSITE" id="PS50832">
    <property type="entry name" value="S1_IF1_TYPE"/>
    <property type="match status" value="1"/>
</dbReference>
<gene>
    <name evidence="1" type="primary">infA</name>
    <name type="ordered locus">BSU01390</name>
</gene>
<keyword id="KW-0963">Cytoplasm</keyword>
<keyword id="KW-0396">Initiation factor</keyword>
<keyword id="KW-0597">Phosphoprotein</keyword>
<keyword id="KW-0648">Protein biosynthesis</keyword>
<keyword id="KW-1185">Reference proteome</keyword>
<keyword id="KW-0694">RNA-binding</keyword>
<keyword id="KW-0699">rRNA-binding</keyword>
<reference key="1">
    <citation type="journal article" date="1989" name="J. Bacteriol.">
        <title>Gene encoding the alpha core subunit of Bacillus subtilis RNA polymerase is cotranscribed with the genes for initiation factor 1 and ribosomal proteins B, S13, S11, and L17.</title>
        <authorList>
            <person name="Boylan S.A."/>
            <person name="Suh J.-W."/>
            <person name="Thomas S.M."/>
            <person name="Price C.W."/>
        </authorList>
    </citation>
    <scope>NUCLEOTIDE SEQUENCE [GENOMIC DNA]</scope>
</reference>
<reference key="2">
    <citation type="journal article" date="1996" name="Gene">
        <title>Genetic and transcriptional organization of the Bacillus subtilis spc-alpha region.</title>
        <authorList>
            <person name="Suh J.-W."/>
            <person name="Boylan S.A."/>
            <person name="Oh S.H."/>
            <person name="Price C.W."/>
        </authorList>
    </citation>
    <scope>NUCLEOTIDE SEQUENCE [GENOMIC DNA]</scope>
    <source>
        <strain>168 / Marburg / ATCC 6051 / DSM 10 / JCM 1465 / NBRC 13719 / NCIMB 3610 / NRRL NRS-744 / VKM B-501</strain>
    </source>
</reference>
<reference key="3">
    <citation type="journal article" date="1997" name="Nature">
        <title>The complete genome sequence of the Gram-positive bacterium Bacillus subtilis.</title>
        <authorList>
            <person name="Kunst F."/>
            <person name="Ogasawara N."/>
            <person name="Moszer I."/>
            <person name="Albertini A.M."/>
            <person name="Alloni G."/>
            <person name="Azevedo V."/>
            <person name="Bertero M.G."/>
            <person name="Bessieres P."/>
            <person name="Bolotin A."/>
            <person name="Borchert S."/>
            <person name="Borriss R."/>
            <person name="Boursier L."/>
            <person name="Brans A."/>
            <person name="Braun M."/>
            <person name="Brignell S.C."/>
            <person name="Bron S."/>
            <person name="Brouillet S."/>
            <person name="Bruschi C.V."/>
            <person name="Caldwell B."/>
            <person name="Capuano V."/>
            <person name="Carter N.M."/>
            <person name="Choi S.-K."/>
            <person name="Codani J.-J."/>
            <person name="Connerton I.F."/>
            <person name="Cummings N.J."/>
            <person name="Daniel R.A."/>
            <person name="Denizot F."/>
            <person name="Devine K.M."/>
            <person name="Duesterhoeft A."/>
            <person name="Ehrlich S.D."/>
            <person name="Emmerson P.T."/>
            <person name="Entian K.-D."/>
            <person name="Errington J."/>
            <person name="Fabret C."/>
            <person name="Ferrari E."/>
            <person name="Foulger D."/>
            <person name="Fritz C."/>
            <person name="Fujita M."/>
            <person name="Fujita Y."/>
            <person name="Fuma S."/>
            <person name="Galizzi A."/>
            <person name="Galleron N."/>
            <person name="Ghim S.-Y."/>
            <person name="Glaser P."/>
            <person name="Goffeau A."/>
            <person name="Golightly E.J."/>
            <person name="Grandi G."/>
            <person name="Guiseppi G."/>
            <person name="Guy B.J."/>
            <person name="Haga K."/>
            <person name="Haiech J."/>
            <person name="Harwood C.R."/>
            <person name="Henaut A."/>
            <person name="Hilbert H."/>
            <person name="Holsappel S."/>
            <person name="Hosono S."/>
            <person name="Hullo M.-F."/>
            <person name="Itaya M."/>
            <person name="Jones L.-M."/>
            <person name="Joris B."/>
            <person name="Karamata D."/>
            <person name="Kasahara Y."/>
            <person name="Klaerr-Blanchard M."/>
            <person name="Klein C."/>
            <person name="Kobayashi Y."/>
            <person name="Koetter P."/>
            <person name="Koningstein G."/>
            <person name="Krogh S."/>
            <person name="Kumano M."/>
            <person name="Kurita K."/>
            <person name="Lapidus A."/>
            <person name="Lardinois S."/>
            <person name="Lauber J."/>
            <person name="Lazarevic V."/>
            <person name="Lee S.-M."/>
            <person name="Levine A."/>
            <person name="Liu H."/>
            <person name="Masuda S."/>
            <person name="Mauel C."/>
            <person name="Medigue C."/>
            <person name="Medina N."/>
            <person name="Mellado R.P."/>
            <person name="Mizuno M."/>
            <person name="Moestl D."/>
            <person name="Nakai S."/>
            <person name="Noback M."/>
            <person name="Noone D."/>
            <person name="O'Reilly M."/>
            <person name="Ogawa K."/>
            <person name="Ogiwara A."/>
            <person name="Oudega B."/>
            <person name="Park S.-H."/>
            <person name="Parro V."/>
            <person name="Pohl T.M."/>
            <person name="Portetelle D."/>
            <person name="Porwollik S."/>
            <person name="Prescott A.M."/>
            <person name="Presecan E."/>
            <person name="Pujic P."/>
            <person name="Purnelle B."/>
            <person name="Rapoport G."/>
            <person name="Rey M."/>
            <person name="Reynolds S."/>
            <person name="Rieger M."/>
            <person name="Rivolta C."/>
            <person name="Rocha E."/>
            <person name="Roche B."/>
            <person name="Rose M."/>
            <person name="Sadaie Y."/>
            <person name="Sato T."/>
            <person name="Scanlan E."/>
            <person name="Schleich S."/>
            <person name="Schroeter R."/>
            <person name="Scoffone F."/>
            <person name="Sekiguchi J."/>
            <person name="Sekowska A."/>
            <person name="Seror S.J."/>
            <person name="Serror P."/>
            <person name="Shin B.-S."/>
            <person name="Soldo B."/>
            <person name="Sorokin A."/>
            <person name="Tacconi E."/>
            <person name="Takagi T."/>
            <person name="Takahashi H."/>
            <person name="Takemaru K."/>
            <person name="Takeuchi M."/>
            <person name="Tamakoshi A."/>
            <person name="Tanaka T."/>
            <person name="Terpstra P."/>
            <person name="Tognoni A."/>
            <person name="Tosato V."/>
            <person name="Uchiyama S."/>
            <person name="Vandenbol M."/>
            <person name="Vannier F."/>
            <person name="Vassarotti A."/>
            <person name="Viari A."/>
            <person name="Wambutt R."/>
            <person name="Wedler E."/>
            <person name="Wedler H."/>
            <person name="Weitzenegger T."/>
            <person name="Winters P."/>
            <person name="Wipat A."/>
            <person name="Yamamoto H."/>
            <person name="Yamane K."/>
            <person name="Yasumoto K."/>
            <person name="Yata K."/>
            <person name="Yoshida K."/>
            <person name="Yoshikawa H.-F."/>
            <person name="Zumstein E."/>
            <person name="Yoshikawa H."/>
            <person name="Danchin A."/>
        </authorList>
    </citation>
    <scope>NUCLEOTIDE SEQUENCE [LARGE SCALE GENOMIC DNA]</scope>
    <source>
        <strain>168</strain>
    </source>
</reference>
<reference key="4">
    <citation type="journal article" date="2007" name="Mol. Cell. Proteomics">
        <title>The serine/threonine/tyrosine phosphoproteome of the model bacterium Bacillus subtilis.</title>
        <authorList>
            <person name="Macek B."/>
            <person name="Mijakovic I."/>
            <person name="Olsen J.V."/>
            <person name="Gnad F."/>
            <person name="Kumar C."/>
            <person name="Jensen P.R."/>
            <person name="Mann M."/>
        </authorList>
    </citation>
    <scope>PHOSPHORYLATION [LARGE SCALE ANALYSIS] AT TYR-60</scope>
    <scope>IDENTIFICATION BY MASS SPECTROMETRY</scope>
    <source>
        <strain>168</strain>
    </source>
</reference>
<evidence type="ECO:0000255" key="1">
    <source>
        <dbReference type="HAMAP-Rule" id="MF_00075"/>
    </source>
</evidence>
<evidence type="ECO:0000269" key="2">
    <source>
    </source>
</evidence>
<protein>
    <recommendedName>
        <fullName evidence="1">Translation initiation factor IF-1</fullName>
    </recommendedName>
</protein>
<organism>
    <name type="scientific">Bacillus subtilis (strain 168)</name>
    <dbReference type="NCBI Taxonomy" id="224308"/>
    <lineage>
        <taxon>Bacteria</taxon>
        <taxon>Bacillati</taxon>
        <taxon>Bacillota</taxon>
        <taxon>Bacilli</taxon>
        <taxon>Bacillales</taxon>
        <taxon>Bacillaceae</taxon>
        <taxon>Bacillus</taxon>
    </lineage>
</organism>
<feature type="initiator methionine" description="Removed">
    <location>
        <position position="1"/>
    </location>
</feature>
<feature type="chain" id="PRO_0000095738" description="Translation initiation factor IF-1">
    <location>
        <begin position="2"/>
        <end position="72"/>
    </location>
</feature>
<feature type="domain" description="S1-like" evidence="1">
    <location>
        <begin position="2"/>
        <end position="72"/>
    </location>
</feature>
<feature type="modified residue" description="Phosphotyrosine" evidence="1 2">
    <location>
        <position position="60"/>
    </location>
</feature>
<sequence>MAKDDVIEVEGTIVETLPNAMFKVELENGHTVLAHVSGKIRMHFIRILPGDKVTVELSPYDLTRGRITYRYK</sequence>
<name>IF1_BACSU</name>
<comment type="function">
    <text evidence="1">One of the essential components for the initiation of protein synthesis. Stabilizes the binding of IF-2 and IF-3 on the 30S subunit to which N-formylmethionyl-tRNA(fMet) subsequently binds. Helps modulate mRNA selection, yielding the 30S pre-initiation complex (PIC). Upon addition of the 50S ribosomal subunit IF-1, IF-2 and IF-3 are released leaving the mature 70S translation initiation complex.</text>
</comment>
<comment type="subunit">
    <text evidence="1">Component of the 30S ribosomal translation pre-initiation complex which assembles on the 30S ribosome in the order IF-2 and IF-3, IF-1 and N-formylmethionyl-tRNA(fMet); mRNA recruitment can occur at any time during PIC assembly.</text>
</comment>
<comment type="subcellular location">
    <subcellularLocation>
        <location evidence="1">Cytoplasm</location>
    </subcellularLocation>
</comment>
<comment type="similarity">
    <text evidence="1">Belongs to the IF-1 family.</text>
</comment>